<sequence>MACPLDQAIGLLVAIFHKYSGQEGDKNTLSKSELKELIQKELTIGAKLQDAEIAKLMDDLDRNKDQVVNFQEYVTFLGALAMIYNDVLRG</sequence>
<feature type="chain" id="PRO_0000236021" description="Protein S100-A6">
    <location>
        <begin position="1"/>
        <end position="90"/>
    </location>
</feature>
<feature type="domain" description="EF-hand 1" evidence="5">
    <location>
        <begin position="12"/>
        <end position="47"/>
    </location>
</feature>
<feature type="domain" description="EF-hand 2" evidence="4">
    <location>
        <begin position="48"/>
        <end position="83"/>
    </location>
</feature>
<feature type="binding site" evidence="5">
    <location>
        <position position="28"/>
    </location>
    <ligand>
        <name>Ca(2+)</name>
        <dbReference type="ChEBI" id="CHEBI:29108"/>
        <label>1</label>
    </ligand>
</feature>
<feature type="binding site" evidence="5">
    <location>
        <position position="33"/>
    </location>
    <ligand>
        <name>Ca(2+)</name>
        <dbReference type="ChEBI" id="CHEBI:29108"/>
        <label>1</label>
    </ligand>
</feature>
<feature type="binding site" evidence="4">
    <location>
        <position position="61"/>
    </location>
    <ligand>
        <name>Ca(2+)</name>
        <dbReference type="ChEBI" id="CHEBI:29108"/>
        <label>2</label>
    </ligand>
</feature>
<feature type="binding site" evidence="4">
    <location>
        <position position="63"/>
    </location>
    <ligand>
        <name>Ca(2+)</name>
        <dbReference type="ChEBI" id="CHEBI:29108"/>
        <label>2</label>
    </ligand>
</feature>
<feature type="binding site" evidence="4">
    <location>
        <position position="65"/>
    </location>
    <ligand>
        <name>Ca(2+)</name>
        <dbReference type="ChEBI" id="CHEBI:29108"/>
        <label>2</label>
    </ligand>
</feature>
<feature type="binding site" evidence="4">
    <location>
        <position position="72"/>
    </location>
    <ligand>
        <name>Ca(2+)</name>
        <dbReference type="ChEBI" id="CHEBI:29108"/>
        <label>2</label>
    </ligand>
</feature>
<feature type="modified residue" description="N6-acetyllysine" evidence="2">
    <location>
        <position position="40"/>
    </location>
</feature>
<feature type="modified residue" description="N6-acetyllysine; alternate" evidence="3">
    <location>
        <position position="47"/>
    </location>
</feature>
<feature type="modified residue" description="N6-succinyllysine; alternate" evidence="3">
    <location>
        <position position="47"/>
    </location>
</feature>
<evidence type="ECO:0000250" key="1"/>
<evidence type="ECO:0000250" key="2">
    <source>
        <dbReference type="UniProtKB" id="P06703"/>
    </source>
</evidence>
<evidence type="ECO:0000250" key="3">
    <source>
        <dbReference type="UniProtKB" id="P14069"/>
    </source>
</evidence>
<evidence type="ECO:0000255" key="4">
    <source>
        <dbReference type="PROSITE-ProRule" id="PRU00448"/>
    </source>
</evidence>
<evidence type="ECO:0000305" key="5"/>
<accession>Q2EN75</accession>
<name>S10A6_PIG</name>
<protein>
    <recommendedName>
        <fullName>Protein S100-A6</fullName>
    </recommendedName>
    <alternativeName>
        <fullName>Calcyclin</fullName>
    </alternativeName>
    <alternativeName>
        <fullName>S100 calcium-binding protein A6</fullName>
    </alternativeName>
</protein>
<gene>
    <name type="primary">S100A6</name>
</gene>
<keyword id="KW-0007">Acetylation</keyword>
<keyword id="KW-0106">Calcium</keyword>
<keyword id="KW-1003">Cell membrane</keyword>
<keyword id="KW-0963">Cytoplasm</keyword>
<keyword id="KW-0472">Membrane</keyword>
<keyword id="KW-0479">Metal-binding</keyword>
<keyword id="KW-0539">Nucleus</keyword>
<keyword id="KW-1185">Reference proteome</keyword>
<keyword id="KW-0677">Repeat</keyword>
<comment type="function">
    <text evidence="1">May function as calcium sensor and modulator, contributing to cellular calcium signaling. May function by interacting with other proteins, such as TPR-containing proteins, and indirectly play a role in many physiological processes such as the reorganization of the actin cytoskeleton and in cell motility. Binds 2 calcium ions. Calcium binding is cooperative (By similarity).</text>
</comment>
<comment type="subunit">
    <text evidence="1">Homodimer; head to tail assembly of 2 subunits. Interacts with CACYBP in a calcium-dependent manner. Interacts with ANXA2 and ANXA11 (via N-terminus). Interacts with SUGT1. Interacts with TP53; has higher affinity for TP53 that is phosphorylated on its N-terminal domain, and lower affinity for TP53 that is phosphorylated on its C-terminal domain. Interacts with tropomyosin. Interacts with FKBP4. Interacts with PPP5C (via TPR repeats); the interaction is calcium-dependent and modulates PPP5C activity. Interacts with TPPP; this interaction inhibits TPPP dimerization (By similarity).</text>
</comment>
<comment type="subcellular location">
    <subcellularLocation>
        <location evidence="1">Nucleus envelope</location>
    </subcellularLocation>
    <subcellularLocation>
        <location evidence="1">Cytoplasm</location>
    </subcellularLocation>
    <subcellularLocation>
        <location evidence="1">Cell membrane</location>
        <topology evidence="1">Peripheral membrane protein</topology>
        <orientation evidence="1">Cytoplasmic side</orientation>
    </subcellularLocation>
</comment>
<comment type="similarity">
    <text evidence="5">Belongs to the S-100 family.</text>
</comment>
<proteinExistence type="inferred from homology"/>
<organism>
    <name type="scientific">Sus scrofa</name>
    <name type="common">Pig</name>
    <dbReference type="NCBI Taxonomy" id="9823"/>
    <lineage>
        <taxon>Eukaryota</taxon>
        <taxon>Metazoa</taxon>
        <taxon>Chordata</taxon>
        <taxon>Craniata</taxon>
        <taxon>Vertebrata</taxon>
        <taxon>Euteleostomi</taxon>
        <taxon>Mammalia</taxon>
        <taxon>Eutheria</taxon>
        <taxon>Laurasiatheria</taxon>
        <taxon>Artiodactyla</taxon>
        <taxon>Suina</taxon>
        <taxon>Suidae</taxon>
        <taxon>Sus</taxon>
    </lineage>
</organism>
<reference key="1">
    <citation type="submission" date="2006-01" db="EMBL/GenBank/DDBJ databases">
        <authorList>
            <person name="Chen C.H."/>
            <person name="Ding S.T."/>
        </authorList>
    </citation>
    <scope>NUCLEOTIDE SEQUENCE [MRNA]</scope>
</reference>
<dbReference type="EMBL" id="DQ372082">
    <property type="protein sequence ID" value="ABD18457.1"/>
    <property type="molecule type" value="mRNA"/>
</dbReference>
<dbReference type="RefSeq" id="NP_001038022.1">
    <property type="nucleotide sequence ID" value="NM_001044557.1"/>
</dbReference>
<dbReference type="SMR" id="Q2EN75"/>
<dbReference type="FunCoup" id="Q2EN75">
    <property type="interactions" value="249"/>
</dbReference>
<dbReference type="STRING" id="9823.ENSSSCP00000020154"/>
<dbReference type="PeptideAtlas" id="Q2EN75"/>
<dbReference type="Ensembl" id="ENSSSCT00050026870.1">
    <property type="protein sequence ID" value="ENSSSCP00050011121.1"/>
    <property type="gene ID" value="ENSSSCG00050019906.1"/>
</dbReference>
<dbReference type="GeneID" id="733608"/>
<dbReference type="KEGG" id="ssc:733608"/>
<dbReference type="CTD" id="6277"/>
<dbReference type="InParanoid" id="Q2EN75"/>
<dbReference type="OrthoDB" id="8881129at2759"/>
<dbReference type="Proteomes" id="UP000008227">
    <property type="component" value="Unplaced"/>
</dbReference>
<dbReference type="Proteomes" id="UP000314985">
    <property type="component" value="Unplaced"/>
</dbReference>
<dbReference type="Proteomes" id="UP000694570">
    <property type="component" value="Unplaced"/>
</dbReference>
<dbReference type="Proteomes" id="UP000694571">
    <property type="component" value="Unplaced"/>
</dbReference>
<dbReference type="Proteomes" id="UP000694720">
    <property type="component" value="Unplaced"/>
</dbReference>
<dbReference type="Proteomes" id="UP000694722">
    <property type="component" value="Unplaced"/>
</dbReference>
<dbReference type="Proteomes" id="UP000694723">
    <property type="component" value="Unplaced"/>
</dbReference>
<dbReference type="Proteomes" id="UP000694724">
    <property type="component" value="Unplaced"/>
</dbReference>
<dbReference type="Proteomes" id="UP000694725">
    <property type="component" value="Unplaced"/>
</dbReference>
<dbReference type="Proteomes" id="UP000694726">
    <property type="component" value="Unplaced"/>
</dbReference>
<dbReference type="Proteomes" id="UP000694727">
    <property type="component" value="Unplaced"/>
</dbReference>
<dbReference type="Proteomes" id="UP000694728">
    <property type="component" value="Unplaced"/>
</dbReference>
<dbReference type="GO" id="GO:0005737">
    <property type="term" value="C:cytoplasm"/>
    <property type="evidence" value="ECO:0000314"/>
    <property type="project" value="AgBase"/>
</dbReference>
<dbReference type="GO" id="GO:0009898">
    <property type="term" value="C:cytoplasmic side of plasma membrane"/>
    <property type="evidence" value="ECO:0000250"/>
    <property type="project" value="UniProtKB"/>
</dbReference>
<dbReference type="GO" id="GO:0005829">
    <property type="term" value="C:cytosol"/>
    <property type="evidence" value="ECO:0000250"/>
    <property type="project" value="UniProtKB"/>
</dbReference>
<dbReference type="GO" id="GO:0005635">
    <property type="term" value="C:nuclear envelope"/>
    <property type="evidence" value="ECO:0007669"/>
    <property type="project" value="UniProtKB-SubCell"/>
</dbReference>
<dbReference type="GO" id="GO:0005634">
    <property type="term" value="C:nucleus"/>
    <property type="evidence" value="ECO:0000314"/>
    <property type="project" value="AgBase"/>
</dbReference>
<dbReference type="GO" id="GO:0048471">
    <property type="term" value="C:perinuclear region of cytoplasm"/>
    <property type="evidence" value="ECO:0000318"/>
    <property type="project" value="GO_Central"/>
</dbReference>
<dbReference type="GO" id="GO:0005509">
    <property type="term" value="F:calcium ion binding"/>
    <property type="evidence" value="ECO:0000250"/>
    <property type="project" value="UniProtKB"/>
</dbReference>
<dbReference type="GO" id="GO:0048306">
    <property type="term" value="F:calcium-dependent protein binding"/>
    <property type="evidence" value="ECO:0000318"/>
    <property type="project" value="GO_Central"/>
</dbReference>
<dbReference type="GO" id="GO:0044548">
    <property type="term" value="F:S100 protein binding"/>
    <property type="evidence" value="ECO:0000318"/>
    <property type="project" value="GO_Central"/>
</dbReference>
<dbReference type="GO" id="GO:0098586">
    <property type="term" value="P:cellular response to virus"/>
    <property type="evidence" value="ECO:0000315"/>
    <property type="project" value="AgBase"/>
</dbReference>
<dbReference type="CDD" id="cd05029">
    <property type="entry name" value="S-100A6"/>
    <property type="match status" value="1"/>
</dbReference>
<dbReference type="FunFam" id="1.10.238.10:FF:000044">
    <property type="entry name" value="Protein S100"/>
    <property type="match status" value="1"/>
</dbReference>
<dbReference type="Gene3D" id="1.10.238.10">
    <property type="entry name" value="EF-hand"/>
    <property type="match status" value="1"/>
</dbReference>
<dbReference type="InterPro" id="IPR011992">
    <property type="entry name" value="EF-hand-dom_pair"/>
</dbReference>
<dbReference type="InterPro" id="IPR018247">
    <property type="entry name" value="EF_Hand_1_Ca_BS"/>
</dbReference>
<dbReference type="InterPro" id="IPR002048">
    <property type="entry name" value="EF_hand_dom"/>
</dbReference>
<dbReference type="InterPro" id="IPR034118">
    <property type="entry name" value="S-100A6"/>
</dbReference>
<dbReference type="InterPro" id="IPR001751">
    <property type="entry name" value="S100/CaBP7/8-like_CS"/>
</dbReference>
<dbReference type="InterPro" id="IPR013787">
    <property type="entry name" value="S100_Ca-bd_sub"/>
</dbReference>
<dbReference type="PANTHER" id="PTHR11639:SF80">
    <property type="entry name" value="PROTEIN S100-A6"/>
    <property type="match status" value="1"/>
</dbReference>
<dbReference type="PANTHER" id="PTHR11639">
    <property type="entry name" value="S100 CALCIUM-BINDING PROTEIN"/>
    <property type="match status" value="1"/>
</dbReference>
<dbReference type="Pfam" id="PF01023">
    <property type="entry name" value="S_100"/>
    <property type="match status" value="1"/>
</dbReference>
<dbReference type="SMART" id="SM00054">
    <property type="entry name" value="EFh"/>
    <property type="match status" value="1"/>
</dbReference>
<dbReference type="SMART" id="SM01394">
    <property type="entry name" value="S_100"/>
    <property type="match status" value="1"/>
</dbReference>
<dbReference type="SUPFAM" id="SSF47473">
    <property type="entry name" value="EF-hand"/>
    <property type="match status" value="1"/>
</dbReference>
<dbReference type="PROSITE" id="PS00018">
    <property type="entry name" value="EF_HAND_1"/>
    <property type="match status" value="1"/>
</dbReference>
<dbReference type="PROSITE" id="PS50222">
    <property type="entry name" value="EF_HAND_2"/>
    <property type="match status" value="1"/>
</dbReference>
<dbReference type="PROSITE" id="PS00303">
    <property type="entry name" value="S100_CABP"/>
    <property type="match status" value="1"/>
</dbReference>